<name>RL25_SHISS</name>
<evidence type="ECO:0000255" key="1">
    <source>
        <dbReference type="HAMAP-Rule" id="MF_01336"/>
    </source>
</evidence>
<evidence type="ECO:0000305" key="2"/>
<comment type="function">
    <text evidence="1">This is one of the proteins that binds to the 5S RNA in the ribosome where it forms part of the central protuberance.</text>
</comment>
<comment type="subunit">
    <text evidence="1">Part of the 50S ribosomal subunit; part of the 5S rRNA/L5/L18/L25 subcomplex. Contacts the 5S rRNA. Binds to the 5S rRNA independently of L5 and L18.</text>
</comment>
<comment type="similarity">
    <text evidence="1">Belongs to the bacterial ribosomal protein bL25 family.</text>
</comment>
<organism>
    <name type="scientific">Shigella sonnei (strain Ss046)</name>
    <dbReference type="NCBI Taxonomy" id="300269"/>
    <lineage>
        <taxon>Bacteria</taxon>
        <taxon>Pseudomonadati</taxon>
        <taxon>Pseudomonadota</taxon>
        <taxon>Gammaproteobacteria</taxon>
        <taxon>Enterobacterales</taxon>
        <taxon>Enterobacteriaceae</taxon>
        <taxon>Shigella</taxon>
    </lineage>
</organism>
<gene>
    <name evidence="1" type="primary">rplY</name>
    <name type="ordered locus">SSON_2241</name>
</gene>
<sequence length="94" mass="10693">MFTINAEVRKEQGKGASRRLRAANKFPAIIYGGKEAPLAIELDHDKVMNMQAKAEFYSEVLTIVVDGKEIKVKAQDVQRHPYKPKLQHIDFVRA</sequence>
<proteinExistence type="inferred from homology"/>
<dbReference type="EMBL" id="CP000038">
    <property type="protein sequence ID" value="AAZ88890.1"/>
    <property type="molecule type" value="Genomic_DNA"/>
</dbReference>
<dbReference type="RefSeq" id="WP_000494183.1">
    <property type="nucleotide sequence ID" value="NC_007384.1"/>
</dbReference>
<dbReference type="SMR" id="Q3Z022"/>
<dbReference type="GeneID" id="93774996"/>
<dbReference type="KEGG" id="ssn:SSON_2241"/>
<dbReference type="HOGENOM" id="CLU_137946_0_0_6"/>
<dbReference type="Proteomes" id="UP000002529">
    <property type="component" value="Chromosome"/>
</dbReference>
<dbReference type="GO" id="GO:0022625">
    <property type="term" value="C:cytosolic large ribosomal subunit"/>
    <property type="evidence" value="ECO:0007669"/>
    <property type="project" value="TreeGrafter"/>
</dbReference>
<dbReference type="GO" id="GO:0008097">
    <property type="term" value="F:5S rRNA binding"/>
    <property type="evidence" value="ECO:0007669"/>
    <property type="project" value="InterPro"/>
</dbReference>
<dbReference type="GO" id="GO:0003735">
    <property type="term" value="F:structural constituent of ribosome"/>
    <property type="evidence" value="ECO:0007669"/>
    <property type="project" value="InterPro"/>
</dbReference>
<dbReference type="GO" id="GO:0006412">
    <property type="term" value="P:translation"/>
    <property type="evidence" value="ECO:0007669"/>
    <property type="project" value="UniProtKB-UniRule"/>
</dbReference>
<dbReference type="CDD" id="cd00495">
    <property type="entry name" value="Ribosomal_L25_TL5_CTC"/>
    <property type="match status" value="1"/>
</dbReference>
<dbReference type="FunFam" id="2.40.240.10:FF:000002">
    <property type="entry name" value="50S ribosomal protein L25"/>
    <property type="match status" value="1"/>
</dbReference>
<dbReference type="Gene3D" id="2.40.240.10">
    <property type="entry name" value="Ribosomal Protein L25, Chain P"/>
    <property type="match status" value="1"/>
</dbReference>
<dbReference type="HAMAP" id="MF_01336">
    <property type="entry name" value="Ribosomal_bL25"/>
    <property type="match status" value="1"/>
</dbReference>
<dbReference type="InterPro" id="IPR020056">
    <property type="entry name" value="Rbsml_bL25/Gln-tRNA_synth_N"/>
</dbReference>
<dbReference type="InterPro" id="IPR011035">
    <property type="entry name" value="Ribosomal_bL25/Gln-tRNA_synth"/>
</dbReference>
<dbReference type="InterPro" id="IPR020055">
    <property type="entry name" value="Ribosomal_bL25_short"/>
</dbReference>
<dbReference type="InterPro" id="IPR029751">
    <property type="entry name" value="Ribosomal_L25_dom"/>
</dbReference>
<dbReference type="InterPro" id="IPR020930">
    <property type="entry name" value="Ribosomal_uL5_bac-type"/>
</dbReference>
<dbReference type="NCBIfam" id="NF004612">
    <property type="entry name" value="PRK05943.1"/>
    <property type="match status" value="1"/>
</dbReference>
<dbReference type="PANTHER" id="PTHR33284">
    <property type="entry name" value="RIBOSOMAL PROTEIN L25/GLN-TRNA SYNTHETASE, ANTI-CODON-BINDING DOMAIN-CONTAINING PROTEIN"/>
    <property type="match status" value="1"/>
</dbReference>
<dbReference type="PANTHER" id="PTHR33284:SF1">
    <property type="entry name" value="RIBOSOMAL PROTEIN L25_GLN-TRNA SYNTHETASE, ANTI-CODON-BINDING DOMAIN-CONTAINING PROTEIN"/>
    <property type="match status" value="1"/>
</dbReference>
<dbReference type="Pfam" id="PF01386">
    <property type="entry name" value="Ribosomal_L25p"/>
    <property type="match status" value="1"/>
</dbReference>
<dbReference type="SUPFAM" id="SSF50715">
    <property type="entry name" value="Ribosomal protein L25-like"/>
    <property type="match status" value="1"/>
</dbReference>
<reference key="1">
    <citation type="journal article" date="2005" name="Nucleic Acids Res.">
        <title>Genome dynamics and diversity of Shigella species, the etiologic agents of bacillary dysentery.</title>
        <authorList>
            <person name="Yang F."/>
            <person name="Yang J."/>
            <person name="Zhang X."/>
            <person name="Chen L."/>
            <person name="Jiang Y."/>
            <person name="Yan Y."/>
            <person name="Tang X."/>
            <person name="Wang J."/>
            <person name="Xiong Z."/>
            <person name="Dong J."/>
            <person name="Xue Y."/>
            <person name="Zhu Y."/>
            <person name="Xu X."/>
            <person name="Sun L."/>
            <person name="Chen S."/>
            <person name="Nie H."/>
            <person name="Peng J."/>
            <person name="Xu J."/>
            <person name="Wang Y."/>
            <person name="Yuan Z."/>
            <person name="Wen Y."/>
            <person name="Yao Z."/>
            <person name="Shen Y."/>
            <person name="Qiang B."/>
            <person name="Hou Y."/>
            <person name="Yu J."/>
            <person name="Jin Q."/>
        </authorList>
    </citation>
    <scope>NUCLEOTIDE SEQUENCE [LARGE SCALE GENOMIC DNA]</scope>
    <source>
        <strain>Ss046</strain>
    </source>
</reference>
<protein>
    <recommendedName>
        <fullName evidence="1">Large ribosomal subunit protein bL25</fullName>
    </recommendedName>
    <alternativeName>
        <fullName evidence="2">50S ribosomal protein L25</fullName>
    </alternativeName>
</protein>
<keyword id="KW-1185">Reference proteome</keyword>
<keyword id="KW-0687">Ribonucleoprotein</keyword>
<keyword id="KW-0689">Ribosomal protein</keyword>
<keyword id="KW-0694">RNA-binding</keyword>
<keyword id="KW-0699">rRNA-binding</keyword>
<feature type="chain" id="PRO_0000243108" description="Large ribosomal subunit protein bL25">
    <location>
        <begin position="1"/>
        <end position="94"/>
    </location>
</feature>
<accession>Q3Z022</accession>